<dbReference type="EMBL" id="CP000675">
    <property type="protein sequence ID" value="ABQ56032.1"/>
    <property type="molecule type" value="Genomic_DNA"/>
</dbReference>
<dbReference type="RefSeq" id="WP_011947294.1">
    <property type="nucleotide sequence ID" value="NZ_JAPMSS010000007.1"/>
</dbReference>
<dbReference type="KEGG" id="lpc:LPC_2102"/>
<dbReference type="HOGENOM" id="CLU_008142_4_2_6"/>
<dbReference type="GO" id="GO:0005886">
    <property type="term" value="C:plasma membrane"/>
    <property type="evidence" value="ECO:0007669"/>
    <property type="project" value="UniProtKB-SubCell"/>
</dbReference>
<dbReference type="GO" id="GO:0015079">
    <property type="term" value="F:potassium ion transmembrane transporter activity"/>
    <property type="evidence" value="ECO:0007669"/>
    <property type="project" value="UniProtKB-UniRule"/>
</dbReference>
<dbReference type="GO" id="GO:0015293">
    <property type="term" value="F:symporter activity"/>
    <property type="evidence" value="ECO:0007669"/>
    <property type="project" value="UniProtKB-UniRule"/>
</dbReference>
<dbReference type="HAMAP" id="MF_01522">
    <property type="entry name" value="Kup"/>
    <property type="match status" value="1"/>
</dbReference>
<dbReference type="InterPro" id="IPR003855">
    <property type="entry name" value="K+_transporter"/>
</dbReference>
<dbReference type="InterPro" id="IPR053952">
    <property type="entry name" value="K_trans_C"/>
</dbReference>
<dbReference type="InterPro" id="IPR053951">
    <property type="entry name" value="K_trans_N"/>
</dbReference>
<dbReference type="InterPro" id="IPR023051">
    <property type="entry name" value="Kup"/>
</dbReference>
<dbReference type="PANTHER" id="PTHR30540:SF83">
    <property type="entry name" value="K+ POTASSIUM TRANSPORTER"/>
    <property type="match status" value="1"/>
</dbReference>
<dbReference type="PANTHER" id="PTHR30540">
    <property type="entry name" value="OSMOTIC STRESS POTASSIUM TRANSPORTER"/>
    <property type="match status" value="1"/>
</dbReference>
<dbReference type="Pfam" id="PF02705">
    <property type="entry name" value="K_trans"/>
    <property type="match status" value="1"/>
</dbReference>
<dbReference type="Pfam" id="PF22776">
    <property type="entry name" value="K_trans_C"/>
    <property type="match status" value="1"/>
</dbReference>
<accession>A5IF82</accession>
<feature type="chain" id="PRO_0000315987" description="Probable potassium transport system protein Kup 3">
    <location>
        <begin position="1"/>
        <end position="629"/>
    </location>
</feature>
<feature type="transmembrane region" description="Helical" evidence="1">
    <location>
        <begin position="20"/>
        <end position="40"/>
    </location>
</feature>
<feature type="transmembrane region" description="Helical" evidence="1">
    <location>
        <begin position="54"/>
        <end position="74"/>
    </location>
</feature>
<feature type="transmembrane region" description="Helical" evidence="1">
    <location>
        <begin position="106"/>
        <end position="126"/>
    </location>
</feature>
<feature type="transmembrane region" description="Helical" evidence="1">
    <location>
        <begin position="143"/>
        <end position="163"/>
    </location>
</feature>
<feature type="transmembrane region" description="Helical" evidence="1">
    <location>
        <begin position="171"/>
        <end position="191"/>
    </location>
</feature>
<feature type="transmembrane region" description="Helical" evidence="1">
    <location>
        <begin position="212"/>
        <end position="232"/>
    </location>
</feature>
<feature type="transmembrane region" description="Helical" evidence="1">
    <location>
        <begin position="253"/>
        <end position="273"/>
    </location>
</feature>
<feature type="transmembrane region" description="Helical" evidence="1">
    <location>
        <begin position="291"/>
        <end position="311"/>
    </location>
</feature>
<feature type="transmembrane region" description="Helical" evidence="1">
    <location>
        <begin position="343"/>
        <end position="363"/>
    </location>
</feature>
<feature type="transmembrane region" description="Helical" evidence="1">
    <location>
        <begin position="372"/>
        <end position="392"/>
    </location>
</feature>
<feature type="transmembrane region" description="Helical" evidence="1">
    <location>
        <begin position="400"/>
        <end position="420"/>
    </location>
</feature>
<feature type="transmembrane region" description="Helical" evidence="1">
    <location>
        <begin position="425"/>
        <end position="445"/>
    </location>
</feature>
<name>KUP3_LEGPC</name>
<comment type="function">
    <text evidence="1">Transport of potassium into the cell. Likely operates as a K(+):H(+) symporter.</text>
</comment>
<comment type="catalytic activity">
    <reaction evidence="1">
        <text>K(+)(in) + H(+)(in) = K(+)(out) + H(+)(out)</text>
        <dbReference type="Rhea" id="RHEA:28490"/>
        <dbReference type="ChEBI" id="CHEBI:15378"/>
        <dbReference type="ChEBI" id="CHEBI:29103"/>
    </reaction>
    <physiologicalReaction direction="right-to-left" evidence="1">
        <dbReference type="Rhea" id="RHEA:28492"/>
    </physiologicalReaction>
</comment>
<comment type="subcellular location">
    <subcellularLocation>
        <location evidence="1">Cell inner membrane</location>
        <topology evidence="1">Multi-pass membrane protein</topology>
    </subcellularLocation>
</comment>
<comment type="similarity">
    <text evidence="1">Belongs to the HAK/KUP transporter (TC 2.A.72) family.</text>
</comment>
<evidence type="ECO:0000255" key="1">
    <source>
        <dbReference type="HAMAP-Rule" id="MF_01522"/>
    </source>
</evidence>
<sequence>MPSTRNIETHNDSNPTLRALSLSALGIVYGDIGTSPLYTFKTVILLAGGGTPDVTTIMGSASLIIWTLIIIASVKYICFALRIDNDGEGGILALMSLLSLKLKQKPFIIAVGLMGAALIYGDGTITPAISVLSAVEGLEILSPSLKYYVLPIAITILITLFAIQSKGTATIGKAFGPVMAFWFLTIGILGAREVIQHPFVLAAINPVYGLNFLFSNGATGFFILCGVFLCVTGAEALYADLGHFGTAPIRCAWFGLAFPSLIFNYLGQAALVLEGASTEHNIFYMLCPSDFLLPLIILSTVATIIASQAIITGAFSMTRQAMQLGWLPRLRVTQTSSEGYGQIYIGVVNWLLMLATLGLIIGFGSSEKLAAAYGIAVSATMLCTSVLLFIALHKLWKWNIIKSGLVAGLFMIVDASFFAANLTKFINGGYIPITLAIIIYSMMYIWHKGYKTIAIKQKEKNITVDSFLDSIQKEGVVRVPKTAVFLTSKEQDIPPTLVWHVKKNHVLQDKVIILNINNLSIPWCKPGDQLQIVETGAGIWHAVANYGFMEQPHIPKLLKKLETQGYDINIKDITYYIGHETIFVRNVRHTLSKYIKILFVFMHRNALPMSNYFHLPPESVFEIGRQIEI</sequence>
<proteinExistence type="inferred from homology"/>
<gene>
    <name evidence="1" type="primary">kup3</name>
    <name type="ordered locus">LPC_2102</name>
</gene>
<protein>
    <recommendedName>
        <fullName evidence="1">Probable potassium transport system protein Kup 3</fullName>
    </recommendedName>
</protein>
<keyword id="KW-0997">Cell inner membrane</keyword>
<keyword id="KW-1003">Cell membrane</keyword>
<keyword id="KW-0406">Ion transport</keyword>
<keyword id="KW-0472">Membrane</keyword>
<keyword id="KW-0630">Potassium</keyword>
<keyword id="KW-0633">Potassium transport</keyword>
<keyword id="KW-0769">Symport</keyword>
<keyword id="KW-0812">Transmembrane</keyword>
<keyword id="KW-1133">Transmembrane helix</keyword>
<keyword id="KW-0813">Transport</keyword>
<reference key="1">
    <citation type="submission" date="2006-11" db="EMBL/GenBank/DDBJ databases">
        <title>Identification and characterization of a new conjugation/ type IVA secretion system (trb/tra) of L. pneumophila Corby localized on a mobile genomic island.</title>
        <authorList>
            <person name="Gloeckner G."/>
            <person name="Albert-Weissenberger C."/>
            <person name="Weinmann E."/>
            <person name="Jacobi S."/>
            <person name="Schunder E."/>
            <person name="Steinert M."/>
            <person name="Buchrieser C."/>
            <person name="Hacker J."/>
            <person name="Heuner K."/>
        </authorList>
    </citation>
    <scope>NUCLEOTIDE SEQUENCE [LARGE SCALE GENOMIC DNA]</scope>
    <source>
        <strain>Corby</strain>
    </source>
</reference>
<organism>
    <name type="scientific">Legionella pneumophila (strain Corby)</name>
    <dbReference type="NCBI Taxonomy" id="400673"/>
    <lineage>
        <taxon>Bacteria</taxon>
        <taxon>Pseudomonadati</taxon>
        <taxon>Pseudomonadota</taxon>
        <taxon>Gammaproteobacteria</taxon>
        <taxon>Legionellales</taxon>
        <taxon>Legionellaceae</taxon>
        <taxon>Legionella</taxon>
    </lineage>
</organism>